<name>KTHY_GEOSW</name>
<gene>
    <name evidence="1" type="primary">tmk</name>
    <name type="ordered locus">GWCH70_0026</name>
</gene>
<accession>C5D352</accession>
<keyword id="KW-0067">ATP-binding</keyword>
<keyword id="KW-0418">Kinase</keyword>
<keyword id="KW-0545">Nucleotide biosynthesis</keyword>
<keyword id="KW-0547">Nucleotide-binding</keyword>
<keyword id="KW-0808">Transferase</keyword>
<evidence type="ECO:0000255" key="1">
    <source>
        <dbReference type="HAMAP-Rule" id="MF_00165"/>
    </source>
</evidence>
<organism>
    <name type="scientific">Geobacillus sp. (strain WCH70)</name>
    <dbReference type="NCBI Taxonomy" id="471223"/>
    <lineage>
        <taxon>Bacteria</taxon>
        <taxon>Bacillati</taxon>
        <taxon>Bacillota</taxon>
        <taxon>Bacilli</taxon>
        <taxon>Bacillales</taxon>
        <taxon>Anoxybacillaceae</taxon>
        <taxon>Geobacillus</taxon>
    </lineage>
</organism>
<feature type="chain" id="PRO_1000203618" description="Thymidylate kinase">
    <location>
        <begin position="1"/>
        <end position="210"/>
    </location>
</feature>
<feature type="binding site" evidence="1">
    <location>
        <begin position="10"/>
        <end position="17"/>
    </location>
    <ligand>
        <name>ATP</name>
        <dbReference type="ChEBI" id="CHEBI:30616"/>
    </ligand>
</feature>
<protein>
    <recommendedName>
        <fullName evidence="1">Thymidylate kinase</fullName>
        <ecNumber evidence="1">2.7.4.9</ecNumber>
    </recommendedName>
    <alternativeName>
        <fullName evidence="1">dTMP kinase</fullName>
    </alternativeName>
</protein>
<proteinExistence type="inferred from homology"/>
<sequence>MKGRFFSFEGPDGAGKTTMITKLESFLREKGFDVLLTREPGGVRIAEEIRSIILNPKHTEMDGRTEALLYAAARRQHLLEKIIPAIKAGKIVLCDRFVDSSLAYQGFARGLGIDEILQINQFAIDGFFPSLTIYFDIDPKIGLERIQKNKQREINRLDMESLSFHYKVREGYLKIAERFSDRIIVIDASKPVDEVFAMTIAAVMDQIEGR</sequence>
<comment type="function">
    <text evidence="1">Phosphorylation of dTMP to form dTDP in both de novo and salvage pathways of dTTP synthesis.</text>
</comment>
<comment type="catalytic activity">
    <reaction evidence="1">
        <text>dTMP + ATP = dTDP + ADP</text>
        <dbReference type="Rhea" id="RHEA:13517"/>
        <dbReference type="ChEBI" id="CHEBI:30616"/>
        <dbReference type="ChEBI" id="CHEBI:58369"/>
        <dbReference type="ChEBI" id="CHEBI:63528"/>
        <dbReference type="ChEBI" id="CHEBI:456216"/>
        <dbReference type="EC" id="2.7.4.9"/>
    </reaction>
</comment>
<comment type="similarity">
    <text evidence="1">Belongs to the thymidylate kinase family.</text>
</comment>
<reference key="1">
    <citation type="submission" date="2009-06" db="EMBL/GenBank/DDBJ databases">
        <title>Complete sequence of chromosome of Geopacillus sp. WCH70.</title>
        <authorList>
            <consortium name="US DOE Joint Genome Institute"/>
            <person name="Lucas S."/>
            <person name="Copeland A."/>
            <person name="Lapidus A."/>
            <person name="Glavina del Rio T."/>
            <person name="Dalin E."/>
            <person name="Tice H."/>
            <person name="Bruce D."/>
            <person name="Goodwin L."/>
            <person name="Pitluck S."/>
            <person name="Chertkov O."/>
            <person name="Brettin T."/>
            <person name="Detter J.C."/>
            <person name="Han C."/>
            <person name="Larimer F."/>
            <person name="Land M."/>
            <person name="Hauser L."/>
            <person name="Kyrpides N."/>
            <person name="Mikhailova N."/>
            <person name="Brumm P."/>
            <person name="Mead D.A."/>
            <person name="Richardson P."/>
        </authorList>
    </citation>
    <scope>NUCLEOTIDE SEQUENCE [LARGE SCALE GENOMIC DNA]</scope>
    <source>
        <strain>WCH70</strain>
    </source>
</reference>
<dbReference type="EC" id="2.7.4.9" evidence="1"/>
<dbReference type="EMBL" id="CP001638">
    <property type="protein sequence ID" value="ACS22968.1"/>
    <property type="molecule type" value="Genomic_DNA"/>
</dbReference>
<dbReference type="SMR" id="C5D352"/>
<dbReference type="STRING" id="471223.GWCH70_0026"/>
<dbReference type="KEGG" id="gwc:GWCH70_0026"/>
<dbReference type="eggNOG" id="COG0125">
    <property type="taxonomic scope" value="Bacteria"/>
</dbReference>
<dbReference type="HOGENOM" id="CLU_049131_0_2_9"/>
<dbReference type="OrthoDB" id="9774907at2"/>
<dbReference type="GO" id="GO:0005829">
    <property type="term" value="C:cytosol"/>
    <property type="evidence" value="ECO:0007669"/>
    <property type="project" value="TreeGrafter"/>
</dbReference>
<dbReference type="GO" id="GO:0005524">
    <property type="term" value="F:ATP binding"/>
    <property type="evidence" value="ECO:0007669"/>
    <property type="project" value="UniProtKB-UniRule"/>
</dbReference>
<dbReference type="GO" id="GO:0004798">
    <property type="term" value="F:dTMP kinase activity"/>
    <property type="evidence" value="ECO:0007669"/>
    <property type="project" value="UniProtKB-UniRule"/>
</dbReference>
<dbReference type="GO" id="GO:0006233">
    <property type="term" value="P:dTDP biosynthetic process"/>
    <property type="evidence" value="ECO:0007669"/>
    <property type="project" value="InterPro"/>
</dbReference>
<dbReference type="GO" id="GO:0006235">
    <property type="term" value="P:dTTP biosynthetic process"/>
    <property type="evidence" value="ECO:0007669"/>
    <property type="project" value="UniProtKB-UniRule"/>
</dbReference>
<dbReference type="GO" id="GO:0006227">
    <property type="term" value="P:dUDP biosynthetic process"/>
    <property type="evidence" value="ECO:0007669"/>
    <property type="project" value="TreeGrafter"/>
</dbReference>
<dbReference type="CDD" id="cd01672">
    <property type="entry name" value="TMPK"/>
    <property type="match status" value="1"/>
</dbReference>
<dbReference type="FunFam" id="3.40.50.300:FF:000225">
    <property type="entry name" value="Thymidylate kinase"/>
    <property type="match status" value="1"/>
</dbReference>
<dbReference type="Gene3D" id="3.40.50.300">
    <property type="entry name" value="P-loop containing nucleotide triphosphate hydrolases"/>
    <property type="match status" value="1"/>
</dbReference>
<dbReference type="HAMAP" id="MF_00165">
    <property type="entry name" value="Thymidylate_kinase"/>
    <property type="match status" value="1"/>
</dbReference>
<dbReference type="InterPro" id="IPR027417">
    <property type="entry name" value="P-loop_NTPase"/>
</dbReference>
<dbReference type="InterPro" id="IPR039430">
    <property type="entry name" value="Thymidylate_kin-like_dom"/>
</dbReference>
<dbReference type="InterPro" id="IPR018095">
    <property type="entry name" value="Thymidylate_kin_CS"/>
</dbReference>
<dbReference type="InterPro" id="IPR018094">
    <property type="entry name" value="Thymidylate_kinase"/>
</dbReference>
<dbReference type="NCBIfam" id="TIGR00041">
    <property type="entry name" value="DTMP_kinase"/>
    <property type="match status" value="1"/>
</dbReference>
<dbReference type="PANTHER" id="PTHR10344">
    <property type="entry name" value="THYMIDYLATE KINASE"/>
    <property type="match status" value="1"/>
</dbReference>
<dbReference type="PANTHER" id="PTHR10344:SF4">
    <property type="entry name" value="UMP-CMP KINASE 2, MITOCHONDRIAL"/>
    <property type="match status" value="1"/>
</dbReference>
<dbReference type="Pfam" id="PF02223">
    <property type="entry name" value="Thymidylate_kin"/>
    <property type="match status" value="1"/>
</dbReference>
<dbReference type="SUPFAM" id="SSF52540">
    <property type="entry name" value="P-loop containing nucleoside triphosphate hydrolases"/>
    <property type="match status" value="1"/>
</dbReference>
<dbReference type="PROSITE" id="PS01331">
    <property type="entry name" value="THYMIDYLATE_KINASE"/>
    <property type="match status" value="1"/>
</dbReference>